<feature type="chain" id="PRO_0000047541" description="Zinc finger protein 341">
    <location>
        <begin position="1"/>
        <end position="854"/>
    </location>
</feature>
<feature type="zinc finger region" description="C2H2-type 1; atypical" evidence="1">
    <location>
        <begin position="53"/>
        <end position="76"/>
    </location>
</feature>
<feature type="zinc finger region" description="C2H2-type 2" evidence="1">
    <location>
        <begin position="322"/>
        <end position="344"/>
    </location>
</feature>
<feature type="zinc finger region" description="C2H2-type 3" evidence="1">
    <location>
        <begin position="350"/>
        <end position="372"/>
    </location>
</feature>
<feature type="zinc finger region" description="C2H2-type 4" evidence="1">
    <location>
        <begin position="445"/>
        <end position="467"/>
    </location>
</feature>
<feature type="zinc finger region" description="C2H2-type 5" evidence="1">
    <location>
        <begin position="473"/>
        <end position="497"/>
    </location>
</feature>
<feature type="zinc finger region" description="C2H2-type 6" evidence="1">
    <location>
        <begin position="503"/>
        <end position="525"/>
    </location>
</feature>
<feature type="zinc finger region" description="C2H2-type 7" evidence="1">
    <location>
        <begin position="540"/>
        <end position="564"/>
    </location>
</feature>
<feature type="zinc finger region" description="C2H2-type 8" evidence="1">
    <location>
        <begin position="566"/>
        <end position="588"/>
    </location>
</feature>
<feature type="zinc finger region" description="C2H2-type 9" evidence="1">
    <location>
        <begin position="594"/>
        <end position="616"/>
    </location>
</feature>
<feature type="zinc finger region" description="C2H2-type 10" evidence="1">
    <location>
        <begin position="622"/>
        <end position="644"/>
    </location>
</feature>
<feature type="zinc finger region" description="C2H2-type 11" evidence="1">
    <location>
        <begin position="650"/>
        <end position="677"/>
    </location>
</feature>
<feature type="zinc finger region" description="C2H2-type 12" evidence="1">
    <location>
        <begin position="683"/>
        <end position="705"/>
    </location>
</feature>
<feature type="region of interest" description="Disordered" evidence="2">
    <location>
        <begin position="152"/>
        <end position="217"/>
    </location>
</feature>
<feature type="region of interest" description="Disordered" evidence="2">
    <location>
        <begin position="399"/>
        <end position="434"/>
    </location>
</feature>
<feature type="region of interest" description="Disordered" evidence="2">
    <location>
        <begin position="731"/>
        <end position="763"/>
    </location>
</feature>
<feature type="compositionally biased region" description="Polar residues" evidence="2">
    <location>
        <begin position="163"/>
        <end position="176"/>
    </location>
</feature>
<feature type="compositionally biased region" description="Pro residues" evidence="2">
    <location>
        <begin position="177"/>
        <end position="210"/>
    </location>
</feature>
<feature type="compositionally biased region" description="Low complexity" evidence="2">
    <location>
        <begin position="408"/>
        <end position="422"/>
    </location>
</feature>
<feature type="splice variant" id="VSP_027218" description="In isoform 2." evidence="5">
    <location>
        <begin position="306"/>
        <end position="312"/>
    </location>
</feature>
<feature type="sequence variant" id="VAR_081880" description="In HIES3; does not localize to the nucleus." evidence="4">
    <location>
        <begin position="195"/>
        <end position="854"/>
    </location>
</feature>
<feature type="sequence variant" id="VAR_081881" description="In HIES3; absence of the full-length protein in patient cells; loss of function in transcriptional STAT3 activation; loss of DNA binding; does not localize to the nucleus." evidence="3 4">
    <location>
        <begin position="302"/>
        <end position="854"/>
    </location>
</feature>
<feature type="sequence variant" id="VAR_081882" description="In HIES3; decreased function in transcriptional STAT3 activation; severely reduced DNA binding in vitro; does not affect nuclear localization." evidence="3">
    <location>
        <begin position="386"/>
        <end position="854"/>
    </location>
</feature>
<feature type="sequence variant" id="VAR_081883" description="In HIES3; absence of the full-length protein in patient cells; results in weak DNA binding in vitro; does not affect localization to the nucleus." evidence="4">
    <location>
        <begin position="549"/>
        <end position="854"/>
    </location>
</feature>
<feature type="sequence conflict" description="In Ref. 4; BAB55193." evidence="6" ref="4">
    <original>G</original>
    <variation>D</variation>
    <location>
        <position position="659"/>
    </location>
</feature>
<feature type="sequence conflict" description="In Ref. 4; BAB55193." evidence="6" ref="4">
    <original>T</original>
    <variation>M</variation>
    <location>
        <position position="706"/>
    </location>
</feature>
<reference key="1">
    <citation type="journal article" date="2001" name="Nature">
        <title>The DNA sequence and comparative analysis of human chromosome 20.</title>
        <authorList>
            <person name="Deloukas P."/>
            <person name="Matthews L.H."/>
            <person name="Ashurst J.L."/>
            <person name="Burton J."/>
            <person name="Gilbert J.G.R."/>
            <person name="Jones M."/>
            <person name="Stavrides G."/>
            <person name="Almeida J.P."/>
            <person name="Babbage A.K."/>
            <person name="Bagguley C.L."/>
            <person name="Bailey J."/>
            <person name="Barlow K.F."/>
            <person name="Bates K.N."/>
            <person name="Beard L.M."/>
            <person name="Beare D.M."/>
            <person name="Beasley O.P."/>
            <person name="Bird C.P."/>
            <person name="Blakey S.E."/>
            <person name="Bridgeman A.M."/>
            <person name="Brown A.J."/>
            <person name="Buck D."/>
            <person name="Burrill W.D."/>
            <person name="Butler A.P."/>
            <person name="Carder C."/>
            <person name="Carter N.P."/>
            <person name="Chapman J.C."/>
            <person name="Clamp M."/>
            <person name="Clark G."/>
            <person name="Clark L.N."/>
            <person name="Clark S.Y."/>
            <person name="Clee C.M."/>
            <person name="Clegg S."/>
            <person name="Cobley V.E."/>
            <person name="Collier R.E."/>
            <person name="Connor R.E."/>
            <person name="Corby N.R."/>
            <person name="Coulson A."/>
            <person name="Coville G.J."/>
            <person name="Deadman R."/>
            <person name="Dhami P.D."/>
            <person name="Dunn M."/>
            <person name="Ellington A.G."/>
            <person name="Frankland J.A."/>
            <person name="Fraser A."/>
            <person name="French L."/>
            <person name="Garner P."/>
            <person name="Grafham D.V."/>
            <person name="Griffiths C."/>
            <person name="Griffiths M.N.D."/>
            <person name="Gwilliam R."/>
            <person name="Hall R.E."/>
            <person name="Hammond S."/>
            <person name="Harley J.L."/>
            <person name="Heath P.D."/>
            <person name="Ho S."/>
            <person name="Holden J.L."/>
            <person name="Howden P.J."/>
            <person name="Huckle E."/>
            <person name="Hunt A.R."/>
            <person name="Hunt S.E."/>
            <person name="Jekosch K."/>
            <person name="Johnson C.M."/>
            <person name="Johnson D."/>
            <person name="Kay M.P."/>
            <person name="Kimberley A.M."/>
            <person name="King A."/>
            <person name="Knights A."/>
            <person name="Laird G.K."/>
            <person name="Lawlor S."/>
            <person name="Lehvaeslaiho M.H."/>
            <person name="Leversha M.A."/>
            <person name="Lloyd C."/>
            <person name="Lloyd D.M."/>
            <person name="Lovell J.D."/>
            <person name="Marsh V.L."/>
            <person name="Martin S.L."/>
            <person name="McConnachie L.J."/>
            <person name="McLay K."/>
            <person name="McMurray A.A."/>
            <person name="Milne S.A."/>
            <person name="Mistry D."/>
            <person name="Moore M.J.F."/>
            <person name="Mullikin J.C."/>
            <person name="Nickerson T."/>
            <person name="Oliver K."/>
            <person name="Parker A."/>
            <person name="Patel R."/>
            <person name="Pearce T.A.V."/>
            <person name="Peck A.I."/>
            <person name="Phillimore B.J.C.T."/>
            <person name="Prathalingam S.R."/>
            <person name="Plumb R.W."/>
            <person name="Ramsay H."/>
            <person name="Rice C.M."/>
            <person name="Ross M.T."/>
            <person name="Scott C.E."/>
            <person name="Sehra H.K."/>
            <person name="Shownkeen R."/>
            <person name="Sims S."/>
            <person name="Skuce C.D."/>
            <person name="Smith M.L."/>
            <person name="Soderlund C."/>
            <person name="Steward C.A."/>
            <person name="Sulston J.E."/>
            <person name="Swann R.M."/>
            <person name="Sycamore N."/>
            <person name="Taylor R."/>
            <person name="Tee L."/>
            <person name="Thomas D.W."/>
            <person name="Thorpe A."/>
            <person name="Tracey A."/>
            <person name="Tromans A.C."/>
            <person name="Vaudin M."/>
            <person name="Wall M."/>
            <person name="Wallis J.M."/>
            <person name="Whitehead S.L."/>
            <person name="Whittaker P."/>
            <person name="Willey D.L."/>
            <person name="Williams L."/>
            <person name="Williams S.A."/>
            <person name="Wilming L."/>
            <person name="Wray P.W."/>
            <person name="Hubbard T."/>
            <person name="Durbin R.M."/>
            <person name="Bentley D.R."/>
            <person name="Beck S."/>
            <person name="Rogers J."/>
        </authorList>
    </citation>
    <scope>NUCLEOTIDE SEQUENCE [LARGE SCALE GENOMIC DNA]</scope>
</reference>
<reference key="2">
    <citation type="submission" date="2005-09" db="EMBL/GenBank/DDBJ databases">
        <authorList>
            <person name="Mural R.J."/>
            <person name="Istrail S."/>
            <person name="Sutton G.G."/>
            <person name="Florea L."/>
            <person name="Halpern A.L."/>
            <person name="Mobarry C.M."/>
            <person name="Lippert R."/>
            <person name="Walenz B."/>
            <person name="Shatkay H."/>
            <person name="Dew I."/>
            <person name="Miller J.R."/>
            <person name="Flanigan M.J."/>
            <person name="Edwards N.J."/>
            <person name="Bolanos R."/>
            <person name="Fasulo D."/>
            <person name="Halldorsson B.V."/>
            <person name="Hannenhalli S."/>
            <person name="Turner R."/>
            <person name="Yooseph S."/>
            <person name="Lu F."/>
            <person name="Nusskern D.R."/>
            <person name="Shue B.C."/>
            <person name="Zheng X.H."/>
            <person name="Zhong F."/>
            <person name="Delcher A.L."/>
            <person name="Huson D.H."/>
            <person name="Kravitz S.A."/>
            <person name="Mouchard L."/>
            <person name="Reinert K."/>
            <person name="Remington K.A."/>
            <person name="Clark A.G."/>
            <person name="Waterman M.S."/>
            <person name="Eichler E.E."/>
            <person name="Adams M.D."/>
            <person name="Hunkapiller M.W."/>
            <person name="Myers E.W."/>
            <person name="Venter J.C."/>
        </authorList>
    </citation>
    <scope>NUCLEOTIDE SEQUENCE [LARGE SCALE GENOMIC DNA]</scope>
</reference>
<reference key="3">
    <citation type="journal article" date="2004" name="Genome Res.">
        <title>The status, quality, and expansion of the NIH full-length cDNA project: the Mammalian Gene Collection (MGC).</title>
        <authorList>
            <consortium name="The MGC Project Team"/>
        </authorList>
    </citation>
    <scope>NUCLEOTIDE SEQUENCE [LARGE SCALE MRNA] (ISOFORMS 1 AND 2)</scope>
</reference>
<reference key="4">
    <citation type="journal article" date="2004" name="Nat. Genet.">
        <title>Complete sequencing and characterization of 21,243 full-length human cDNAs.</title>
        <authorList>
            <person name="Ota T."/>
            <person name="Suzuki Y."/>
            <person name="Nishikawa T."/>
            <person name="Otsuki T."/>
            <person name="Sugiyama T."/>
            <person name="Irie R."/>
            <person name="Wakamatsu A."/>
            <person name="Hayashi K."/>
            <person name="Sato H."/>
            <person name="Nagai K."/>
            <person name="Kimura K."/>
            <person name="Makita H."/>
            <person name="Sekine M."/>
            <person name="Obayashi M."/>
            <person name="Nishi T."/>
            <person name="Shibahara T."/>
            <person name="Tanaka T."/>
            <person name="Ishii S."/>
            <person name="Yamamoto J."/>
            <person name="Saito K."/>
            <person name="Kawai Y."/>
            <person name="Isono Y."/>
            <person name="Nakamura Y."/>
            <person name="Nagahari K."/>
            <person name="Murakami K."/>
            <person name="Yasuda T."/>
            <person name="Iwayanagi T."/>
            <person name="Wagatsuma M."/>
            <person name="Shiratori A."/>
            <person name="Sudo H."/>
            <person name="Hosoiri T."/>
            <person name="Kaku Y."/>
            <person name="Kodaira H."/>
            <person name="Kondo H."/>
            <person name="Sugawara M."/>
            <person name="Takahashi M."/>
            <person name="Kanda K."/>
            <person name="Yokoi T."/>
            <person name="Furuya T."/>
            <person name="Kikkawa E."/>
            <person name="Omura Y."/>
            <person name="Abe K."/>
            <person name="Kamihara K."/>
            <person name="Katsuta N."/>
            <person name="Sato K."/>
            <person name="Tanikawa M."/>
            <person name="Yamazaki M."/>
            <person name="Ninomiya K."/>
            <person name="Ishibashi T."/>
            <person name="Yamashita H."/>
            <person name="Murakawa K."/>
            <person name="Fujimori K."/>
            <person name="Tanai H."/>
            <person name="Kimata M."/>
            <person name="Watanabe M."/>
            <person name="Hiraoka S."/>
            <person name="Chiba Y."/>
            <person name="Ishida S."/>
            <person name="Ono Y."/>
            <person name="Takiguchi S."/>
            <person name="Watanabe S."/>
            <person name="Yosida M."/>
            <person name="Hotuta T."/>
            <person name="Kusano J."/>
            <person name="Kanehori K."/>
            <person name="Takahashi-Fujii A."/>
            <person name="Hara H."/>
            <person name="Tanase T.-O."/>
            <person name="Nomura Y."/>
            <person name="Togiya S."/>
            <person name="Komai F."/>
            <person name="Hara R."/>
            <person name="Takeuchi K."/>
            <person name="Arita M."/>
            <person name="Imose N."/>
            <person name="Musashino K."/>
            <person name="Yuuki H."/>
            <person name="Oshima A."/>
            <person name="Sasaki N."/>
            <person name="Aotsuka S."/>
            <person name="Yoshikawa Y."/>
            <person name="Matsunawa H."/>
            <person name="Ichihara T."/>
            <person name="Shiohata N."/>
            <person name="Sano S."/>
            <person name="Moriya S."/>
            <person name="Momiyama H."/>
            <person name="Satoh N."/>
            <person name="Takami S."/>
            <person name="Terashima Y."/>
            <person name="Suzuki O."/>
            <person name="Nakagawa S."/>
            <person name="Senoh A."/>
            <person name="Mizoguchi H."/>
            <person name="Goto Y."/>
            <person name="Shimizu F."/>
            <person name="Wakebe H."/>
            <person name="Hishigaki H."/>
            <person name="Watanabe T."/>
            <person name="Sugiyama A."/>
            <person name="Takemoto M."/>
            <person name="Kawakami B."/>
            <person name="Yamazaki M."/>
            <person name="Watanabe K."/>
            <person name="Kumagai A."/>
            <person name="Itakura S."/>
            <person name="Fukuzumi Y."/>
            <person name="Fujimori Y."/>
            <person name="Komiyama M."/>
            <person name="Tashiro H."/>
            <person name="Tanigami A."/>
            <person name="Fujiwara T."/>
            <person name="Ono T."/>
            <person name="Yamada K."/>
            <person name="Fujii Y."/>
            <person name="Ozaki K."/>
            <person name="Hirao M."/>
            <person name="Ohmori Y."/>
            <person name="Kawabata A."/>
            <person name="Hikiji T."/>
            <person name="Kobatake N."/>
            <person name="Inagaki H."/>
            <person name="Ikema Y."/>
            <person name="Okamoto S."/>
            <person name="Okitani R."/>
            <person name="Kawakami T."/>
            <person name="Noguchi S."/>
            <person name="Itoh T."/>
            <person name="Shigeta K."/>
            <person name="Senba T."/>
            <person name="Matsumura K."/>
            <person name="Nakajima Y."/>
            <person name="Mizuno T."/>
            <person name="Morinaga M."/>
            <person name="Sasaki M."/>
            <person name="Togashi T."/>
            <person name="Oyama M."/>
            <person name="Hata H."/>
            <person name="Watanabe M."/>
            <person name="Komatsu T."/>
            <person name="Mizushima-Sugano J."/>
            <person name="Satoh T."/>
            <person name="Shirai Y."/>
            <person name="Takahashi Y."/>
            <person name="Nakagawa K."/>
            <person name="Okumura K."/>
            <person name="Nagase T."/>
            <person name="Nomura N."/>
            <person name="Kikuchi H."/>
            <person name="Masuho Y."/>
            <person name="Yamashita R."/>
            <person name="Nakai K."/>
            <person name="Yada T."/>
            <person name="Nakamura Y."/>
            <person name="Ohara O."/>
            <person name="Isogai T."/>
            <person name="Sugano S."/>
        </authorList>
    </citation>
    <scope>NUCLEOTIDE SEQUENCE [LARGE SCALE MRNA] OF 322-854</scope>
</reference>
<reference key="5">
    <citation type="journal article" date="2018" name="Sci. Immunol.">
        <title>ZNF341 controls STAT3 expression and thereby immunocompetence.</title>
        <authorList>
            <person name="Frey-Jakobs S."/>
            <person name="Hartberger J.M."/>
            <person name="Fliegauf M."/>
            <person name="Bossen C."/>
            <person name="Wehmeyer M.L."/>
            <person name="Neubauer J.C."/>
            <person name="Bulashevska A."/>
            <person name="Proietti M."/>
            <person name="Froebel P."/>
            <person name="Noeltner C."/>
            <person name="Yang L."/>
            <person name="Rojas-Restrepo J."/>
            <person name="Langer N."/>
            <person name="Winzer S."/>
            <person name="Engelhardt K.R."/>
            <person name="Glocker C."/>
            <person name="Pfeifer D."/>
            <person name="Klein A."/>
            <person name="Schaeffer A.A."/>
            <person name="Lagovsky I."/>
            <person name="Lachover-Roth I."/>
            <person name="Beziat V."/>
            <person name="Puel A."/>
            <person name="Casanova J.L."/>
            <person name="Fleckenstein B."/>
            <person name="Weidinger S."/>
            <person name="Kilic S.S."/>
            <person name="Garty B.Z."/>
            <person name="Etzioni A."/>
            <person name="Grimbacher B."/>
        </authorList>
    </citation>
    <scope>FUNCTION</scope>
    <scope>SUBUNIT</scope>
    <scope>SUBCELLULAR LOCATION</scope>
    <scope>INVOLVEMENT IN HIES3</scope>
    <scope>VARIANTS HIES3 302-ARG--GLU-854 DEL AND 386-ARG--GLU-854 DEL</scope>
    <scope>CHARACTERIZATION OF VARIANTS HIES3 302-ARG--GLU-854 DEL AND 386-ARG--GLU-854 DEL</scope>
</reference>
<reference key="6">
    <citation type="journal article" date="2018" name="Sci. Immunol.">
        <title>A recessive form of hyper-IgE syndrome by disruption of ZNF341-dependent STAT3 transcription and activity.</title>
        <authorList>
            <person name="Beziat V."/>
            <person name="Li J."/>
            <person name="Lin J.X."/>
            <person name="Ma C.S."/>
            <person name="Li P."/>
            <person name="Bousfiha A."/>
            <person name="Pellier I."/>
            <person name="Zoghi S."/>
            <person name="Baris S."/>
            <person name="Keles S."/>
            <person name="Gray P."/>
            <person name="Du N."/>
            <person name="Wang Y."/>
            <person name="Zerbib Y."/>
            <person name="Levy R."/>
            <person name="Leclercq T."/>
            <person name="About F."/>
            <person name="Lim A.I."/>
            <person name="Rao G."/>
            <person name="Payne K."/>
            <person name="Pelham S.J."/>
            <person name="Avery D.T."/>
            <person name="Deenick E.K."/>
            <person name="Pillay B."/>
            <person name="Chou J."/>
            <person name="Guery R."/>
            <person name="Belkadi A."/>
            <person name="Guerin A."/>
            <person name="Migaud M."/>
            <person name="Rattina V."/>
            <person name="Ailal F."/>
            <person name="Benhsaien I."/>
            <person name="Bouaziz M."/>
            <person name="Habib T."/>
            <person name="Chaussabel D."/>
            <person name="Marr N."/>
            <person name="El-Benna J."/>
            <person name="Grimbacher B."/>
            <person name="Wargon O."/>
            <person name="Bustamante J."/>
            <person name="Boisson B."/>
            <person name="Mueller-Fleckenstein I."/>
            <person name="Fleckenstein B."/>
            <person name="Chandesris M.O."/>
            <person name="Titeux M."/>
            <person name="Fraitag S."/>
            <person name="Alyanakian M.A."/>
            <person name="Leruez-Ville M."/>
            <person name="Picard C."/>
            <person name="Meyts I."/>
            <person name="Di Santo J.P."/>
            <person name="Hovnanian A."/>
            <person name="Somer A."/>
            <person name="Ozen A."/>
            <person name="Rezaei N."/>
            <person name="Chatila T.A."/>
            <person name="Abel L."/>
            <person name="Leonard W.J."/>
            <person name="Tangye S.G."/>
            <person name="Puel A."/>
            <person name="Casanova J.L."/>
        </authorList>
    </citation>
    <scope>FUNCTION</scope>
    <scope>SUBCELLULAR LOCATION</scope>
    <scope>INVOLVEMENT IN HIES3</scope>
    <scope>VARIANTS HIES3 195-GLN--GLU-854 DEL; 302-ARG--GLU-854 DEL AND 549-TYR--GLU-854 DEL</scope>
    <scope>CHARACTERIZATION OF VARIANTS HIES3 195-GLN--GLU-854 DEL; 302-ARG--GLU-854 DEL AND 549-TYR--GLU-854 DEL</scope>
</reference>
<sequence>MAQAIFEALEGMDNQTVLAVQSLLDGQGAVPDPTGQSVNAPPAIQPLDDEDVFLCGKCKKQFNSLPAFMTHKREQCQGNAPALATVSLATNSIYPPSAAPTAVQQAPTPANRQISTYITVPPSPLIQTLVQGNILVSDDVLMSAMSAFTSLDQPMPQGPPPVQSSLNMHSVPSYLTQPPPPPPPPPPLPPPPPPQPPPPPPQSLGPPGRPNPGGNGVVEVYSAAAPLAGSGTVEIQALGMQPYPPLEVPNQCVEPPVYPTPTVYSPGKQGFKPKGPNPAAPMTSATGGTVATFDSPATLKTRRAKGARGLPEAAGKPKAQKLKCSYCDKSFTKNFDLQQHIRSHTGEKPFQCIACGRAFAQKSNVKKHMQTHKVWPPGHSGGTVSRNSVTVQVMALNPSRQEDEESTGLGQPLPGAPQPQALSTAGEEEGDKPESKQVVLIDSSYLCQFCPSKFSTYFQLKSHMTQHKNEQVYKCVVKSCAQTFPKLDTFLEHIKSHQEELSYRCHLCGKDFPSLYDLGVHQYSHSLLPQHSPKKDNAVYKCVKCVNKYSTPEALEHHLQTATHNFPCPHCQKVFPCERYLRRHLPTHGSGGRFKCQVCKKFFRREHYLKLHAHIHSGEKPYKCSVCESAFNRKDKLKRHMLIHEPFKKYKCPFSTHTGCSKEFNRPDKLKAHILSHSGMKLHKCALCSKSFSRRAHLAEHQRAHTGNYKFRCAGCAKGFSRHKYLKDHRCRLGPQKDKDLQTRRPPQRRAAPRSCGSGGRKVLTPLPDPLGLEELKDTGAGLVPEAVPGKPPFAEPDAVLSIVVGGAVGAETELVVPGHAEGLGSNLALAELQAGAEGPCAMLAVPVYIQASE</sequence>
<organism>
    <name type="scientific">Homo sapiens</name>
    <name type="common">Human</name>
    <dbReference type="NCBI Taxonomy" id="9606"/>
    <lineage>
        <taxon>Eukaryota</taxon>
        <taxon>Metazoa</taxon>
        <taxon>Chordata</taxon>
        <taxon>Craniata</taxon>
        <taxon>Vertebrata</taxon>
        <taxon>Euteleostomi</taxon>
        <taxon>Mammalia</taxon>
        <taxon>Eutheria</taxon>
        <taxon>Euarchontoglires</taxon>
        <taxon>Primates</taxon>
        <taxon>Haplorrhini</taxon>
        <taxon>Catarrhini</taxon>
        <taxon>Hominidae</taxon>
        <taxon>Homo</taxon>
    </lineage>
</organism>
<proteinExistence type="evidence at protein level"/>
<dbReference type="EMBL" id="AL050349">
    <property type="status" value="NOT_ANNOTATED_CDS"/>
    <property type="molecule type" value="Genomic_DNA"/>
</dbReference>
<dbReference type="EMBL" id="CH471077">
    <property type="protein sequence ID" value="EAW76295.1"/>
    <property type="molecule type" value="Genomic_DNA"/>
</dbReference>
<dbReference type="EMBL" id="BC132873">
    <property type="protein sequence ID" value="AAI32874.1"/>
    <property type="molecule type" value="mRNA"/>
</dbReference>
<dbReference type="EMBL" id="BC144188">
    <property type="protein sequence ID" value="AAI44189.1"/>
    <property type="molecule type" value="mRNA"/>
</dbReference>
<dbReference type="EMBL" id="BC146811">
    <property type="protein sequence ID" value="AAI46812.1"/>
    <property type="molecule type" value="mRNA"/>
</dbReference>
<dbReference type="EMBL" id="BC157823">
    <property type="protein sequence ID" value="AAI57824.1"/>
    <property type="molecule type" value="mRNA"/>
</dbReference>
<dbReference type="EMBL" id="AK027550">
    <property type="protein sequence ID" value="BAB55193.1"/>
    <property type="status" value="ALT_INIT"/>
    <property type="molecule type" value="mRNA"/>
</dbReference>
<dbReference type="CCDS" id="CCDS13227.1">
    <molecule id="Q9BYN7-2"/>
</dbReference>
<dbReference type="CCDS" id="CCDS74719.1">
    <molecule id="Q9BYN7-1"/>
</dbReference>
<dbReference type="RefSeq" id="NP_001269862.1">
    <molecule id="Q9BYN7-1"/>
    <property type="nucleotide sequence ID" value="NM_001282933.2"/>
</dbReference>
<dbReference type="RefSeq" id="NP_001269864.1">
    <property type="nucleotide sequence ID" value="NM_001282935.1"/>
</dbReference>
<dbReference type="RefSeq" id="NP_116208.3">
    <molecule id="Q9BYN7-2"/>
    <property type="nucleotide sequence ID" value="NM_032819.4"/>
</dbReference>
<dbReference type="SMR" id="Q9BYN7"/>
<dbReference type="BioGRID" id="124344">
    <property type="interactions" value="22"/>
</dbReference>
<dbReference type="FunCoup" id="Q9BYN7">
    <property type="interactions" value="1605"/>
</dbReference>
<dbReference type="IntAct" id="Q9BYN7">
    <property type="interactions" value="22"/>
</dbReference>
<dbReference type="STRING" id="9606.ENSP00000364346"/>
<dbReference type="GlyGen" id="Q9BYN7">
    <property type="glycosylation" value="2 sites"/>
</dbReference>
<dbReference type="iPTMnet" id="Q9BYN7"/>
<dbReference type="PhosphoSitePlus" id="Q9BYN7"/>
<dbReference type="BioMuta" id="ZNF341"/>
<dbReference type="DMDM" id="76803837"/>
<dbReference type="jPOST" id="Q9BYN7"/>
<dbReference type="MassIVE" id="Q9BYN7"/>
<dbReference type="PaxDb" id="9606-ENSP00000364346"/>
<dbReference type="PeptideAtlas" id="Q9BYN7"/>
<dbReference type="ProteomicsDB" id="79671">
    <molecule id="Q9BYN7-1"/>
</dbReference>
<dbReference type="ProteomicsDB" id="79672">
    <molecule id="Q9BYN7-2"/>
</dbReference>
<dbReference type="Antibodypedia" id="10751">
    <property type="antibodies" value="112 antibodies from 19 providers"/>
</dbReference>
<dbReference type="DNASU" id="84905"/>
<dbReference type="Ensembl" id="ENST00000342427.6">
    <molecule id="Q9BYN7-2"/>
    <property type="protein sequence ID" value="ENSP00000344308.2"/>
    <property type="gene ID" value="ENSG00000131061.15"/>
</dbReference>
<dbReference type="Ensembl" id="ENST00000375200.6">
    <molecule id="Q9BYN7-1"/>
    <property type="protein sequence ID" value="ENSP00000364346.1"/>
    <property type="gene ID" value="ENSG00000131061.15"/>
</dbReference>
<dbReference type="GeneID" id="84905"/>
<dbReference type="KEGG" id="hsa:84905"/>
<dbReference type="MANE-Select" id="ENST00000375200.6">
    <property type="protein sequence ID" value="ENSP00000364346.1"/>
    <property type="RefSeq nucleotide sequence ID" value="NM_001282933.2"/>
    <property type="RefSeq protein sequence ID" value="NP_001269862.1"/>
</dbReference>
<dbReference type="UCSC" id="uc002wzx.5">
    <molecule id="Q9BYN7-1"/>
    <property type="organism name" value="human"/>
</dbReference>
<dbReference type="AGR" id="HGNC:15992"/>
<dbReference type="CTD" id="84905"/>
<dbReference type="DisGeNET" id="84905"/>
<dbReference type="GeneCards" id="ZNF341"/>
<dbReference type="HGNC" id="HGNC:15992">
    <property type="gene designation" value="ZNF341"/>
</dbReference>
<dbReference type="HPA" id="ENSG00000131061">
    <property type="expression patterns" value="Low tissue specificity"/>
</dbReference>
<dbReference type="MalaCards" id="ZNF341"/>
<dbReference type="MIM" id="618269">
    <property type="type" value="gene"/>
</dbReference>
<dbReference type="MIM" id="618282">
    <property type="type" value="phenotype"/>
</dbReference>
<dbReference type="neXtProt" id="NX_Q9BYN7"/>
<dbReference type="OpenTargets" id="ENSG00000131061"/>
<dbReference type="Orphanet" id="641368">
    <property type="disease" value="Autosomal recessive hyper-IgE syndrome due to ZNF341 deficiency"/>
</dbReference>
<dbReference type="PharmGKB" id="PA38076"/>
<dbReference type="VEuPathDB" id="HostDB:ENSG00000131061"/>
<dbReference type="eggNOG" id="KOG1721">
    <property type="taxonomic scope" value="Eukaryota"/>
</dbReference>
<dbReference type="GeneTree" id="ENSGT00390000000546"/>
<dbReference type="HOGENOM" id="CLU_013403_0_0_1"/>
<dbReference type="InParanoid" id="Q9BYN7"/>
<dbReference type="OMA" id="DGPCAML"/>
<dbReference type="OrthoDB" id="10064525at2759"/>
<dbReference type="PAN-GO" id="Q9BYN7">
    <property type="GO annotations" value="3 GO annotations based on evolutionary models"/>
</dbReference>
<dbReference type="PhylomeDB" id="Q9BYN7"/>
<dbReference type="TreeFam" id="TF333164"/>
<dbReference type="PathwayCommons" id="Q9BYN7"/>
<dbReference type="SignaLink" id="Q9BYN7"/>
<dbReference type="SIGNOR" id="Q9BYN7"/>
<dbReference type="BioGRID-ORCS" id="84905">
    <property type="hits" value="16 hits in 1179 CRISPR screens"/>
</dbReference>
<dbReference type="ChiTaRS" id="ZNF341">
    <property type="organism name" value="human"/>
</dbReference>
<dbReference type="GenomeRNAi" id="84905"/>
<dbReference type="Pharos" id="Q9BYN7">
    <property type="development level" value="Tbio"/>
</dbReference>
<dbReference type="PRO" id="PR:Q9BYN7"/>
<dbReference type="Proteomes" id="UP000005640">
    <property type="component" value="Chromosome 20"/>
</dbReference>
<dbReference type="RNAct" id="Q9BYN7">
    <property type="molecule type" value="protein"/>
</dbReference>
<dbReference type="Bgee" id="ENSG00000131061">
    <property type="expression patterns" value="Expressed in primordial germ cell in gonad and 106 other cell types or tissues"/>
</dbReference>
<dbReference type="ExpressionAtlas" id="Q9BYN7">
    <property type="expression patterns" value="baseline and differential"/>
</dbReference>
<dbReference type="GO" id="GO:0005634">
    <property type="term" value="C:nucleus"/>
    <property type="evidence" value="ECO:0000314"/>
    <property type="project" value="UniProtKB"/>
</dbReference>
<dbReference type="GO" id="GO:0003677">
    <property type="term" value="F:DNA binding"/>
    <property type="evidence" value="ECO:0000314"/>
    <property type="project" value="UniProtKB"/>
</dbReference>
<dbReference type="GO" id="GO:0001216">
    <property type="term" value="F:DNA-binding transcription activator activity"/>
    <property type="evidence" value="ECO:0000314"/>
    <property type="project" value="UniProtKB"/>
</dbReference>
<dbReference type="GO" id="GO:0000981">
    <property type="term" value="F:DNA-binding transcription factor activity, RNA polymerase II-specific"/>
    <property type="evidence" value="ECO:0000318"/>
    <property type="project" value="GO_Central"/>
</dbReference>
<dbReference type="GO" id="GO:0000978">
    <property type="term" value="F:RNA polymerase II cis-regulatory region sequence-specific DNA binding"/>
    <property type="evidence" value="ECO:0000318"/>
    <property type="project" value="GO_Central"/>
</dbReference>
<dbReference type="GO" id="GO:0008270">
    <property type="term" value="F:zinc ion binding"/>
    <property type="evidence" value="ECO:0007669"/>
    <property type="project" value="UniProtKB-KW"/>
</dbReference>
<dbReference type="GO" id="GO:0006355">
    <property type="term" value="P:regulation of DNA-templated transcription"/>
    <property type="evidence" value="ECO:0000318"/>
    <property type="project" value="GO_Central"/>
</dbReference>
<dbReference type="FunFam" id="3.30.160.60:FF:000679">
    <property type="entry name" value="Zinc finger protein 341"/>
    <property type="match status" value="1"/>
</dbReference>
<dbReference type="FunFam" id="3.30.160.60:FF:001132">
    <property type="entry name" value="Zinc finger protein 341"/>
    <property type="match status" value="1"/>
</dbReference>
<dbReference type="FunFam" id="3.30.160.60:FF:000611">
    <property type="entry name" value="zinc finger protein 341 isoform X1"/>
    <property type="match status" value="1"/>
</dbReference>
<dbReference type="FunFam" id="3.30.160.60:FF:000618">
    <property type="entry name" value="zinc finger protein 341 isoform X1"/>
    <property type="match status" value="1"/>
</dbReference>
<dbReference type="FunFam" id="3.30.160.60:FF:001031">
    <property type="entry name" value="zinc finger protein 341 isoform X1"/>
    <property type="match status" value="1"/>
</dbReference>
<dbReference type="FunFam" id="3.30.160.60:FF:001263">
    <property type="entry name" value="zinc finger protein 341 isoform X1"/>
    <property type="match status" value="1"/>
</dbReference>
<dbReference type="FunFam" id="3.30.160.60:FF:002200">
    <property type="entry name" value="zinc finger protein 341 isoform X1"/>
    <property type="match status" value="1"/>
</dbReference>
<dbReference type="FunFam" id="3.30.160.60:FF:001225">
    <property type="entry name" value="zinc finger protein 341 isoform X2"/>
    <property type="match status" value="1"/>
</dbReference>
<dbReference type="Gene3D" id="3.30.160.60">
    <property type="entry name" value="Classic Zinc Finger"/>
    <property type="match status" value="8"/>
</dbReference>
<dbReference type="InterPro" id="IPR036236">
    <property type="entry name" value="Znf_C2H2_sf"/>
</dbReference>
<dbReference type="InterPro" id="IPR013087">
    <property type="entry name" value="Znf_C2H2_type"/>
</dbReference>
<dbReference type="PANTHER" id="PTHR24379:SF121">
    <property type="entry name" value="C2H2-TYPE DOMAIN-CONTAINING PROTEIN"/>
    <property type="match status" value="1"/>
</dbReference>
<dbReference type="PANTHER" id="PTHR24379">
    <property type="entry name" value="KRAB AND ZINC FINGER DOMAIN-CONTAINING"/>
    <property type="match status" value="1"/>
</dbReference>
<dbReference type="Pfam" id="PF00096">
    <property type="entry name" value="zf-C2H2"/>
    <property type="match status" value="5"/>
</dbReference>
<dbReference type="Pfam" id="PF13912">
    <property type="entry name" value="zf-C2H2_6"/>
    <property type="match status" value="2"/>
</dbReference>
<dbReference type="SMART" id="SM00355">
    <property type="entry name" value="ZnF_C2H2"/>
    <property type="match status" value="12"/>
</dbReference>
<dbReference type="SUPFAM" id="SSF57667">
    <property type="entry name" value="beta-beta-alpha zinc fingers"/>
    <property type="match status" value="7"/>
</dbReference>
<dbReference type="PROSITE" id="PS00028">
    <property type="entry name" value="ZINC_FINGER_C2H2_1"/>
    <property type="match status" value="10"/>
</dbReference>
<dbReference type="PROSITE" id="PS50157">
    <property type="entry name" value="ZINC_FINGER_C2H2_2"/>
    <property type="match status" value="12"/>
</dbReference>
<name>ZN341_HUMAN</name>
<comment type="function">
    <text evidence="3 4">Transcriptional activator of STAT3 involved in the regulation of immune homeostasis. Also able to activate STAT1 transcription.</text>
</comment>
<comment type="subunit">
    <text evidence="3">Binds DNA and to the STAT3 promoter.</text>
</comment>
<comment type="interaction">
    <interactant intactId="EBI-9089622">
        <id>Q9BYN7</id>
    </interactant>
    <interactant intactId="EBI-12002214">
        <id>Q9H3H3-3</id>
        <label>C11orf68</label>
    </interactant>
    <organismsDiffer>false</organismsDiffer>
    <experiments>3</experiments>
</comment>
<comment type="interaction">
    <interactant intactId="EBI-9089622">
        <id>Q9BYN7</id>
    </interactant>
    <interactant intactId="EBI-10250303">
        <id>Q6IPU0</id>
        <label>CENPP</label>
    </interactant>
    <organismsDiffer>false</organismsDiffer>
    <experiments>3</experiments>
</comment>
<comment type="interaction">
    <interactant intactId="EBI-9089622">
        <id>Q9BYN7</id>
    </interactant>
    <interactant intactId="EBI-711360">
        <id>P33240</id>
        <label>CSTF2</label>
    </interactant>
    <organismsDiffer>false</organismsDiffer>
    <experiments>3</experiments>
</comment>
<comment type="interaction">
    <interactant intactId="EBI-9089622">
        <id>Q9BYN7</id>
    </interactant>
    <interactant intactId="EBI-489887">
        <id>P50402</id>
        <label>EMD</label>
    </interactant>
    <organismsDiffer>false</organismsDiffer>
    <experiments>3</experiments>
</comment>
<comment type="interaction">
    <interactant intactId="EBI-9089622">
        <id>Q9BYN7</id>
    </interactant>
    <interactant intactId="EBI-401755">
        <id>P62993</id>
        <label>GRB2</label>
    </interactant>
    <organismsDiffer>false</organismsDiffer>
    <experiments>3</experiments>
</comment>
<comment type="interaction">
    <interactant intactId="EBI-9089622">
        <id>Q9BYN7</id>
    </interactant>
    <interactant intactId="EBI-6426443">
        <id>Q2WGJ6</id>
        <label>KLHL38</label>
    </interactant>
    <organismsDiffer>false</organismsDiffer>
    <experiments>3</experiments>
</comment>
<comment type="interaction">
    <interactant intactId="EBI-9089622">
        <id>Q9BYN7</id>
    </interactant>
    <interactant intactId="EBI-751857">
        <id>O15481</id>
        <label>MAGEB4</label>
    </interactant>
    <organismsDiffer>false</organismsDiffer>
    <experiments>3</experiments>
</comment>
<comment type="interaction">
    <interactant intactId="EBI-9089622">
        <id>Q9BYN7</id>
    </interactant>
    <interactant intactId="EBI-713635">
        <id>O43639</id>
        <label>NCK2</label>
    </interactant>
    <organismsDiffer>false</organismsDiffer>
    <experiments>3</experiments>
</comment>
<comment type="interaction">
    <interactant intactId="EBI-9089622">
        <id>Q9BYN7</id>
    </interactant>
    <interactant intactId="EBI-741158">
        <id>Q96HA8</id>
        <label>NTAQ1</label>
    </interactant>
    <organismsDiffer>false</organismsDiffer>
    <experiments>3</experiments>
</comment>
<comment type="interaction">
    <interactant intactId="EBI-9089622">
        <id>Q9BYN7</id>
    </interactant>
    <interactant intactId="EBI-1383632">
        <id>Q13882</id>
        <label>PTK6</label>
    </interactant>
    <organismsDiffer>false</organismsDiffer>
    <experiments>3</experiments>
</comment>
<comment type="interaction">
    <interactant intactId="EBI-16435478">
        <id>Q9BYN7-2</id>
    </interactant>
    <interactant intactId="EBI-357046">
        <id>Q99832</id>
        <label>CCT7</label>
    </interactant>
    <organismsDiffer>false</organismsDiffer>
    <experiments>3</experiments>
</comment>
<comment type="interaction">
    <interactant intactId="EBI-16435478">
        <id>Q9BYN7-2</id>
    </interactant>
    <interactant intactId="EBI-25852368">
        <id>O75460-2</id>
        <label>ERN1</label>
    </interactant>
    <organismsDiffer>false</organismsDiffer>
    <experiments>3</experiments>
</comment>
<comment type="interaction">
    <interactant intactId="EBI-16435478">
        <id>Q9BYN7-2</id>
    </interactant>
    <interactant intactId="EBI-10226858">
        <id>Q0VDC6</id>
        <label>FKBP1A</label>
    </interactant>
    <organismsDiffer>false</organismsDiffer>
    <experiments>3</experiments>
</comment>
<comment type="interaction">
    <interactant intactId="EBI-16435478">
        <id>Q9BYN7-2</id>
    </interactant>
    <interactant intactId="EBI-356991">
        <id>P54652</id>
        <label>HSPA2</label>
    </interactant>
    <organismsDiffer>false</organismsDiffer>
    <experiments>3</experiments>
</comment>
<comment type="interaction">
    <interactant intactId="EBI-16435478">
        <id>Q9BYN7-2</id>
    </interactant>
    <interactant intactId="EBI-1053431">
        <id>P49591</id>
        <label>SARS1</label>
    </interactant>
    <organismsDiffer>false</organismsDiffer>
    <experiments>3</experiments>
</comment>
<comment type="subcellular location">
    <subcellularLocation>
        <location evidence="3 4">Nucleus</location>
    </subcellularLocation>
</comment>
<comment type="alternative products">
    <event type="alternative splicing"/>
    <isoform>
        <id>Q9BYN7-1</id>
        <name>1</name>
        <sequence type="displayed"/>
    </isoform>
    <isoform>
        <id>Q9BYN7-2</id>
        <name>2</name>
        <sequence type="described" ref="VSP_027218"/>
    </isoform>
</comment>
<comment type="disease" evidence="3 4">
    <disease id="DI-05462">
        <name>Hyper-IgE syndrome 3, autosomal recessive, with recurrent infections</name>
        <acronym>HIES3</acronym>
        <description>An immunologic disorder characterized by skin bacterial infections in particular with Staphylococcus aureus, susceptibility to fungal infections such as chronic mucocutaneous candidiasis, atopic dermatitis, recurrent respiratory infections, bronchiectasis, and increased serum IgE and IgG. Immunologic work-up shows impaired differentiation of CD4+ T cells into T-helper 17 cells, decreased memory B cells, and often decreased NK cells. Some patients manifest extrahemapoietic features, including facial dysmorphism, abnormal dentition, alopecia, joint hypermobility and bone fractures. Disease onset is in early childhood.</description>
        <dbReference type="MIM" id="618282"/>
    </disease>
    <text>The disease is caused by variants affecting the gene represented in this entry.</text>
</comment>
<comment type="similarity">
    <text evidence="6">Belongs to the krueppel C2H2-type zinc-finger protein family.</text>
</comment>
<comment type="sequence caution" evidence="6">
    <conflict type="erroneous initiation">
        <sequence resource="EMBL-CDS" id="BAB55193"/>
    </conflict>
</comment>
<gene>
    <name type="primary">ZNF341</name>
</gene>
<evidence type="ECO:0000255" key="1">
    <source>
        <dbReference type="PROSITE-ProRule" id="PRU00042"/>
    </source>
</evidence>
<evidence type="ECO:0000256" key="2">
    <source>
        <dbReference type="SAM" id="MobiDB-lite"/>
    </source>
</evidence>
<evidence type="ECO:0000269" key="3">
    <source>
    </source>
</evidence>
<evidence type="ECO:0000269" key="4">
    <source>
    </source>
</evidence>
<evidence type="ECO:0000303" key="5">
    <source>
    </source>
</evidence>
<evidence type="ECO:0000305" key="6"/>
<keyword id="KW-0025">Alternative splicing</keyword>
<keyword id="KW-0225">Disease variant</keyword>
<keyword id="KW-0238">DNA-binding</keyword>
<keyword id="KW-0479">Metal-binding</keyword>
<keyword id="KW-0539">Nucleus</keyword>
<keyword id="KW-1267">Proteomics identification</keyword>
<keyword id="KW-1185">Reference proteome</keyword>
<keyword id="KW-0677">Repeat</keyword>
<keyword id="KW-0804">Transcription</keyword>
<keyword id="KW-0805">Transcription regulation</keyword>
<keyword id="KW-0862">Zinc</keyword>
<keyword id="KW-0863">Zinc-finger</keyword>
<protein>
    <recommendedName>
        <fullName>Zinc finger protein 341</fullName>
    </recommendedName>
</protein>
<accession>Q9BYN7</accession>
<accession>A2RUF4</accession>
<accession>B2RXE5</accession>
<accession>B7ZM09</accession>
<accession>Q5JXM8</accession>
<accession>Q96ST5</accession>